<protein>
    <recommendedName>
        <fullName>Chlorophyll a-b binding of LHCII type 1 protein</fullName>
    </recommendedName>
    <alternativeName>
        <fullName>Chlorophyll a-b binding of LHCII type I protein</fullName>
        <shortName>CAB</shortName>
        <shortName>LHCP</shortName>
    </alternativeName>
</protein>
<reference key="1">
    <citation type="submission" date="1989-09" db="EMBL/GenBank/DDBJ databases">
        <authorList>
            <person name="Fourcroy P."/>
            <person name="Guidet F."/>
            <person name="Klein-Eude D."/>
        </authorList>
    </citation>
    <scope>NUCLEOTIDE SEQUENCE [MRNA]</scope>
</reference>
<feature type="chain" id="PRO_0000165476" description="Chlorophyll a-b binding of LHCII type 1 protein">
    <location>
        <begin position="1" status="less than"/>
        <end position="124"/>
    </location>
</feature>
<feature type="transmembrane region" description="Helical" evidence="4">
    <location>
        <begin position="9"/>
        <end position="29"/>
    </location>
</feature>
<feature type="transmembrane region" description="Helical" evidence="4">
    <location>
        <begin position="78"/>
        <end position="98"/>
    </location>
</feature>
<feature type="binding site" evidence="1">
    <location>
        <position position="4"/>
    </location>
    <ligand>
        <name>chlorophyll a</name>
        <dbReference type="ChEBI" id="CHEBI:58416"/>
        <label>3</label>
    </ligand>
</feature>
<feature type="binding site" description="axial binding residue" evidence="3">
    <location>
        <position position="10"/>
    </location>
    <ligand>
        <name>chlorophyll b</name>
        <dbReference type="ChEBI" id="CHEBI:61721"/>
        <label>2</label>
    </ligand>
    <ligandPart>
        <name>Mg</name>
        <dbReference type="ChEBI" id="CHEBI:25107"/>
    </ligandPart>
</feature>
<feature type="binding site" evidence="1">
    <location>
        <position position="14"/>
    </location>
    <ligand>
        <name>chlorophyll b</name>
        <dbReference type="ChEBI" id="CHEBI:61721"/>
        <label>3</label>
    </ligand>
</feature>
<feature type="binding site" evidence="1">
    <location>
        <position position="22"/>
    </location>
    <ligand>
        <name>chlorophyll b</name>
        <dbReference type="ChEBI" id="CHEBI:61721"/>
        <label>4</label>
    </ligand>
</feature>
<feature type="binding site" evidence="2">
    <location>
        <position position="22"/>
    </location>
    <ligand>
        <name>chlorophyll b</name>
        <dbReference type="ChEBI" id="CHEBI:61721"/>
        <label>5</label>
    </ligand>
</feature>
<feature type="binding site" description="axial binding residue" evidence="3">
    <location>
        <position position="30"/>
    </location>
    <ligand>
        <name>chlorophyll b</name>
        <dbReference type="ChEBI" id="CHEBI:61721"/>
        <label>3</label>
    </ligand>
    <ligandPart>
        <name>Mg</name>
        <dbReference type="ChEBI" id="CHEBI:25107"/>
    </ligandPart>
</feature>
<feature type="binding site" evidence="1">
    <location>
        <position position="33"/>
    </location>
    <ligand>
        <name>chlorophyll b</name>
        <dbReference type="ChEBI" id="CHEBI:61721"/>
        <label>4</label>
    </ligand>
</feature>
<feature type="binding site" evidence="1">
    <location>
        <position position="40"/>
    </location>
    <ligand>
        <name>chlorophyll b</name>
        <dbReference type="ChEBI" id="CHEBI:61721"/>
        <label>2</label>
    </ligand>
</feature>
<feature type="binding site" evidence="1">
    <location>
        <position position="71"/>
    </location>
    <ligand>
        <name>chlorophyll a</name>
        <dbReference type="ChEBI" id="CHEBI:58416"/>
        <label>5</label>
    </ligand>
</feature>
<feature type="binding site" description="axial binding residue" evidence="3">
    <location>
        <position position="72"/>
    </location>
    <ligand>
        <name>chlorophyll a</name>
        <dbReference type="ChEBI" id="CHEBI:58416"/>
        <label>3</label>
    </ligand>
    <ligandPart>
        <name>Mg</name>
        <dbReference type="ChEBI" id="CHEBI:25107"/>
    </ligandPart>
</feature>
<feature type="binding site" description="axial binding residue" evidence="3">
    <location>
        <position position="75"/>
    </location>
    <ligand>
        <name>chlorophyll a</name>
        <dbReference type="ChEBI" id="CHEBI:58416"/>
        <label>4</label>
    </ligand>
    <ligandPart>
        <name>Mg</name>
        <dbReference type="ChEBI" id="CHEBI:25107"/>
    </ligandPart>
</feature>
<feature type="binding site" description="axial binding residue" evidence="3">
    <location>
        <position position="89"/>
    </location>
    <ligand>
        <name>chlorophyll a</name>
        <dbReference type="ChEBI" id="CHEBI:58416"/>
        <label>5</label>
    </ligand>
    <ligandPart>
        <name>Mg</name>
        <dbReference type="ChEBI" id="CHEBI:25107"/>
    </ligandPart>
</feature>
<feature type="binding site" description="axial binding residue" evidence="3">
    <location>
        <position position="104"/>
    </location>
    <ligand>
        <name>chlorophyll a</name>
        <dbReference type="ChEBI" id="CHEBI:58416"/>
        <label>6</label>
    </ligand>
    <ligandPart>
        <name>Mg</name>
        <dbReference type="ChEBI" id="CHEBI:25107"/>
    </ligandPart>
</feature>
<feature type="binding site" evidence="1">
    <location>
        <position position="113"/>
    </location>
    <ligand>
        <name>chlorophyll a</name>
        <dbReference type="ChEBI" id="CHEBI:58416"/>
        <label>6</label>
    </ligand>
</feature>
<feature type="binding site" evidence="1">
    <location>
        <position position="120"/>
    </location>
    <ligand>
        <name>chlorophyll b</name>
        <dbReference type="ChEBI" id="CHEBI:61721"/>
        <label>5</label>
    </ligand>
</feature>
<feature type="non-terminal residue">
    <location>
        <position position="1"/>
    </location>
</feature>
<keyword id="KW-0148">Chlorophyll</keyword>
<keyword id="KW-0150">Chloroplast</keyword>
<keyword id="KW-0157">Chromophore</keyword>
<keyword id="KW-0460">Magnesium</keyword>
<keyword id="KW-0472">Membrane</keyword>
<keyword id="KW-0479">Metal-binding</keyword>
<keyword id="KW-0597">Phosphoprotein</keyword>
<keyword id="KW-0602">Photosynthesis</keyword>
<keyword id="KW-0603">Photosystem I</keyword>
<keyword id="KW-0604">Photosystem II</keyword>
<keyword id="KW-0934">Plastid</keyword>
<keyword id="KW-1185">Reference proteome</keyword>
<keyword id="KW-0793">Thylakoid</keyword>
<keyword id="KW-0812">Transmembrane</keyword>
<keyword id="KW-1133">Transmembrane helix</keyword>
<proteinExistence type="evidence at transcript level"/>
<organism>
    <name type="scientific">Raphanus sativus</name>
    <name type="common">Radish</name>
    <name type="synonym">Raphanus raphanistrum var. sativus</name>
    <dbReference type="NCBI Taxonomy" id="3726"/>
    <lineage>
        <taxon>Eukaryota</taxon>
        <taxon>Viridiplantae</taxon>
        <taxon>Streptophyta</taxon>
        <taxon>Embryophyta</taxon>
        <taxon>Tracheophyta</taxon>
        <taxon>Spermatophyta</taxon>
        <taxon>Magnoliopsida</taxon>
        <taxon>eudicotyledons</taxon>
        <taxon>Gunneridae</taxon>
        <taxon>Pentapetalae</taxon>
        <taxon>rosids</taxon>
        <taxon>malvids</taxon>
        <taxon>Brassicales</taxon>
        <taxon>Brassicaceae</taxon>
        <taxon>Brassiceae</taxon>
        <taxon>Raphanus</taxon>
    </lineage>
</organism>
<dbReference type="EMBL" id="X16647">
    <property type="protein sequence ID" value="CAA34640.1"/>
    <property type="molecule type" value="mRNA"/>
</dbReference>
<dbReference type="SMR" id="P14584"/>
<dbReference type="Proteomes" id="UP000504610">
    <property type="component" value="Unplaced"/>
</dbReference>
<dbReference type="GO" id="GO:0009535">
    <property type="term" value="C:chloroplast thylakoid membrane"/>
    <property type="evidence" value="ECO:0007669"/>
    <property type="project" value="UniProtKB-SubCell"/>
</dbReference>
<dbReference type="GO" id="GO:0009522">
    <property type="term" value="C:photosystem I"/>
    <property type="evidence" value="ECO:0007669"/>
    <property type="project" value="UniProtKB-KW"/>
</dbReference>
<dbReference type="GO" id="GO:0009523">
    <property type="term" value="C:photosystem II"/>
    <property type="evidence" value="ECO:0007669"/>
    <property type="project" value="UniProtKB-KW"/>
</dbReference>
<dbReference type="GO" id="GO:0016168">
    <property type="term" value="F:chlorophyll binding"/>
    <property type="evidence" value="ECO:0007669"/>
    <property type="project" value="UniProtKB-KW"/>
</dbReference>
<dbReference type="GO" id="GO:0046872">
    <property type="term" value="F:metal ion binding"/>
    <property type="evidence" value="ECO:0007669"/>
    <property type="project" value="UniProtKB-KW"/>
</dbReference>
<dbReference type="GO" id="GO:0009765">
    <property type="term" value="P:photosynthesis, light harvesting"/>
    <property type="evidence" value="ECO:0007669"/>
    <property type="project" value="InterPro"/>
</dbReference>
<dbReference type="Gene3D" id="1.10.3460.10">
    <property type="entry name" value="Chlorophyll a/b binding protein domain"/>
    <property type="match status" value="1"/>
</dbReference>
<dbReference type="InterPro" id="IPR001344">
    <property type="entry name" value="Chloro_AB-bd_pln"/>
</dbReference>
<dbReference type="InterPro" id="IPR022796">
    <property type="entry name" value="Chloroa_b-bind"/>
</dbReference>
<dbReference type="PANTHER" id="PTHR21649">
    <property type="entry name" value="CHLOROPHYLL A/B BINDING PROTEIN"/>
    <property type="match status" value="1"/>
</dbReference>
<dbReference type="Pfam" id="PF00504">
    <property type="entry name" value="Chloroa_b-bind"/>
    <property type="match status" value="1"/>
</dbReference>
<dbReference type="SUPFAM" id="SSF103511">
    <property type="entry name" value="Chlorophyll a-b binding protein"/>
    <property type="match status" value="1"/>
</dbReference>
<name>CB21_RAPSA</name>
<sequence length="124" mass="13222">LDYLGNPSLVHAQSILAIWATQVILMGAVEGYRVAGDGPLGEAEDLLYPGGSFDPLASLTDPEAFAELKVKEIKNGRLAMFSMFGFFVQAIVTGKGPLENLADHLADPVNNNAWAFATNFVPGK</sequence>
<evidence type="ECO:0000250" key="1"/>
<evidence type="ECO:0000250" key="2">
    <source>
        <dbReference type="UniProtKB" id="P07371"/>
    </source>
</evidence>
<evidence type="ECO:0000250" key="3">
    <source>
        <dbReference type="UniProtKB" id="P12333"/>
    </source>
</evidence>
<evidence type="ECO:0000255" key="4"/>
<evidence type="ECO:0000305" key="5"/>
<comment type="function">
    <text>The light-harvesting complex (LHC) functions as a light receptor, it captures and delivers excitation energy to photosystems with which it is closely associated.</text>
</comment>
<comment type="cofactor">
    <text evidence="1">Binds at least 14 chlorophylls (8 Chl-a and 6 Chl-b) and carotenoids such as lutein and neoxanthin.</text>
</comment>
<comment type="subunit">
    <text>The LHC complex consists of chlorophyll a-b binding proteins.</text>
</comment>
<comment type="subcellular location">
    <subcellularLocation>
        <location>Plastid</location>
        <location>Chloroplast thylakoid membrane</location>
        <topology>Multi-pass membrane protein</topology>
    </subcellularLocation>
</comment>
<comment type="domain">
    <text>The N-terminus of the protein extends into the stroma where it is involved with adhesion of granal membranes and post-translational modifications; both are believed to mediate the distribution of excitation energy between photosystems I and II.</text>
</comment>
<comment type="PTM">
    <text evidence="1">Photoregulated by reversible phosphorylation of its threonine residues.</text>
</comment>
<comment type="similarity">
    <text evidence="5">Belongs to the light-harvesting chlorophyll a/b-binding (LHC) protein family.</text>
</comment>
<accession>P14584</accession>